<name>ISAA_STAAS</name>
<organism>
    <name type="scientific">Staphylococcus aureus (strain MSSA476)</name>
    <dbReference type="NCBI Taxonomy" id="282459"/>
    <lineage>
        <taxon>Bacteria</taxon>
        <taxon>Bacillati</taxon>
        <taxon>Bacillota</taxon>
        <taxon>Bacilli</taxon>
        <taxon>Bacillales</taxon>
        <taxon>Staphylococcaceae</taxon>
        <taxon>Staphylococcus</taxon>
    </lineage>
</organism>
<comment type="function">
    <text evidence="1">Is able to cleave peptidoglycan.</text>
</comment>
<comment type="subcellular location">
    <subcellularLocation>
        <location evidence="1">Secreted</location>
    </subcellularLocation>
</comment>
<comment type="similarity">
    <text evidence="2">Belongs to the transglycosylase family. IsaA subfamily.</text>
</comment>
<reference key="1">
    <citation type="journal article" date="2004" name="Proc. Natl. Acad. Sci. U.S.A.">
        <title>Complete genomes of two clinical Staphylococcus aureus strains: evidence for the rapid evolution of virulence and drug resistance.</title>
        <authorList>
            <person name="Holden M.T.G."/>
            <person name="Feil E.J."/>
            <person name="Lindsay J.A."/>
            <person name="Peacock S.J."/>
            <person name="Day N.P.J."/>
            <person name="Enright M.C."/>
            <person name="Foster T.J."/>
            <person name="Moore C.E."/>
            <person name="Hurst L."/>
            <person name="Atkin R."/>
            <person name="Barron A."/>
            <person name="Bason N."/>
            <person name="Bentley S.D."/>
            <person name="Chillingworth C."/>
            <person name="Chillingworth T."/>
            <person name="Churcher C."/>
            <person name="Clark L."/>
            <person name="Corton C."/>
            <person name="Cronin A."/>
            <person name="Doggett J."/>
            <person name="Dowd L."/>
            <person name="Feltwell T."/>
            <person name="Hance Z."/>
            <person name="Harris B."/>
            <person name="Hauser H."/>
            <person name="Holroyd S."/>
            <person name="Jagels K."/>
            <person name="James K.D."/>
            <person name="Lennard N."/>
            <person name="Line A."/>
            <person name="Mayes R."/>
            <person name="Moule S."/>
            <person name="Mungall K."/>
            <person name="Ormond D."/>
            <person name="Quail M.A."/>
            <person name="Rabbinowitsch E."/>
            <person name="Rutherford K.M."/>
            <person name="Sanders M."/>
            <person name="Sharp S."/>
            <person name="Simmonds M."/>
            <person name="Stevens K."/>
            <person name="Whitehead S."/>
            <person name="Barrell B.G."/>
            <person name="Spratt B.G."/>
            <person name="Parkhill J."/>
        </authorList>
    </citation>
    <scope>NUCLEOTIDE SEQUENCE [LARGE SCALE GENOMIC DNA]</scope>
    <source>
        <strain>MSSA476</strain>
    </source>
</reference>
<keyword id="KW-0326">Glycosidase</keyword>
<keyword id="KW-0378">Hydrolase</keyword>
<keyword id="KW-0964">Secreted</keyword>
<keyword id="KW-0732">Signal</keyword>
<dbReference type="EC" id="3.2.-.-"/>
<dbReference type="EMBL" id="BX571857">
    <property type="protein sequence ID" value="CAG44271.1"/>
    <property type="molecule type" value="Genomic_DNA"/>
</dbReference>
<dbReference type="RefSeq" id="WP_000751267.1">
    <property type="nucleotide sequence ID" value="NC_002953.3"/>
</dbReference>
<dbReference type="SMR" id="Q6G6A5"/>
<dbReference type="KEGG" id="sas:SAS2455"/>
<dbReference type="HOGENOM" id="CLU_099865_0_0_9"/>
<dbReference type="GO" id="GO:0005576">
    <property type="term" value="C:extracellular region"/>
    <property type="evidence" value="ECO:0007669"/>
    <property type="project" value="UniProtKB-SubCell"/>
</dbReference>
<dbReference type="GO" id="GO:0016798">
    <property type="term" value="F:hydrolase activity, acting on glycosyl bonds"/>
    <property type="evidence" value="ECO:0007669"/>
    <property type="project" value="UniProtKB-KW"/>
</dbReference>
<dbReference type="Gene3D" id="1.10.530.10">
    <property type="match status" value="1"/>
</dbReference>
<dbReference type="InterPro" id="IPR023346">
    <property type="entry name" value="Lysozyme-like_dom_sf"/>
</dbReference>
<dbReference type="InterPro" id="IPR008258">
    <property type="entry name" value="Transglycosylase_SLT_dom_1"/>
</dbReference>
<dbReference type="Pfam" id="PF01464">
    <property type="entry name" value="SLT"/>
    <property type="match status" value="1"/>
</dbReference>
<dbReference type="SUPFAM" id="SSF53955">
    <property type="entry name" value="Lysozyme-like"/>
    <property type="match status" value="1"/>
</dbReference>
<protein>
    <recommendedName>
        <fullName>Probable transglycosylase IsaA</fullName>
        <ecNumber>3.2.-.-</ecNumber>
    </recommendedName>
    <alternativeName>
        <fullName>Immunodominant staphylococcal antigen A</fullName>
    </alternativeName>
</protein>
<proteinExistence type="inferred from homology"/>
<accession>Q6G6A5</accession>
<feature type="signal peptide" evidence="1">
    <location>
        <begin position="1"/>
        <end position="29"/>
    </location>
</feature>
<feature type="chain" id="PRO_0000021529" description="Probable transglycosylase IsaA">
    <location>
        <begin position="30"/>
        <end position="233"/>
    </location>
</feature>
<sequence length="233" mass="24203">MKKTIMASSLAVALGVTGYAAGTGHQAHAAEVNVDQAHLVDLAHNHQDQLNAAPIKDGAYDIHFVKDGFQYNFTSNGTTWSWSYEAANGQTAGFSNVAGADYTTSYNQGSNVQSVSYNAQSSNSNVEAVSAPTYHNYSTSTTSSSVRLSNGNTAGATGSSAAQIMAQRTGVSASTWAAIIARESNGQVNAYNPSGASGLFQTMPGWGPTNTVDQQINAAVKAYKAQGLGAWGF</sequence>
<evidence type="ECO:0000250" key="1"/>
<evidence type="ECO:0000305" key="2"/>
<gene>
    <name type="primary">isaA</name>
    <name type="ordered locus">SAS2455</name>
</gene>